<sequence length="311" mass="34632">MTDYRTQPINQKNADFVEQVADRIEEMQLEGRSLWQDAKRRFFRNKAAVASLIILAFIIIFITVAPWFFPFTYEDTDWNMMSAAPTMEGYHFFGTDASGRDLLVRTAIGGRISLLVGIAGAFISVTIGTIYGAISGYVGGKTDMLMMRFLEILSSFPFMFFVILLVTLFGQNIFLIFIAIGAIAWLGLARIVRGQTLSLKNKEFVEAAIVCGVPRRQIILKHIIPNVLGLVAVYASLEVPGLILFESFLSFLGLGTQEPMSSWGALLSDGAAQMEVSPWLLIFPAFFLCLTLFCFNFIGDGLRDALDPKDR</sequence>
<keyword id="KW-0997">Cell inner membrane</keyword>
<keyword id="KW-1003">Cell membrane</keyword>
<keyword id="KW-0472">Membrane</keyword>
<keyword id="KW-0571">Peptide transport</keyword>
<keyword id="KW-0653">Protein transport</keyword>
<keyword id="KW-1185">Reference proteome</keyword>
<keyword id="KW-0812">Transmembrane</keyword>
<keyword id="KW-1133">Transmembrane helix</keyword>
<keyword id="KW-0813">Transport</keyword>
<evidence type="ECO:0000250" key="1">
    <source>
        <dbReference type="UniProtKB" id="P0AFH6"/>
    </source>
</evidence>
<evidence type="ECO:0000255" key="2"/>
<evidence type="ECO:0000255" key="3">
    <source>
        <dbReference type="PROSITE-ProRule" id="PRU00441"/>
    </source>
</evidence>
<evidence type="ECO:0000305" key="4"/>
<gene>
    <name type="primary">oppC</name>
    <name type="ordered locus">HI_1122</name>
</gene>
<organism>
    <name type="scientific">Haemophilus influenzae (strain ATCC 51907 / DSM 11121 / KW20 / Rd)</name>
    <dbReference type="NCBI Taxonomy" id="71421"/>
    <lineage>
        <taxon>Bacteria</taxon>
        <taxon>Pseudomonadati</taxon>
        <taxon>Pseudomonadota</taxon>
        <taxon>Gammaproteobacteria</taxon>
        <taxon>Pasteurellales</taxon>
        <taxon>Pasteurellaceae</taxon>
        <taxon>Haemophilus</taxon>
    </lineage>
</organism>
<protein>
    <recommendedName>
        <fullName evidence="4">Oligopeptide transport system permease protein OppC</fullName>
    </recommendedName>
</protein>
<comment type="function">
    <text evidence="1">Part of the ABC transporter complex OppABCDF involved in the uptake of oligopeptides (By similarity). Probably responsible for the translocation of the substrate across the membrane (By similarity).</text>
</comment>
<comment type="subunit">
    <text evidence="1">The complex is composed of two ATP-binding proteins (OppD and OppF), two transmembrane proteins (OppB and OppC) and a solute-binding protein (OppA).</text>
</comment>
<comment type="subcellular location">
    <subcellularLocation>
        <location evidence="1">Cell inner membrane</location>
        <topology evidence="2">Multi-pass membrane protein</topology>
    </subcellularLocation>
</comment>
<comment type="similarity">
    <text evidence="4">Belongs to the binding-protein-dependent transport system permease family. OppBC subfamily.</text>
</comment>
<feature type="chain" id="PRO_0000060152" description="Oligopeptide transport system permease protein OppC">
    <location>
        <begin position="1"/>
        <end position="311"/>
    </location>
</feature>
<feature type="topological domain" description="Cytoplasmic" evidence="4">
    <location>
        <begin position="1"/>
        <end position="48"/>
    </location>
</feature>
<feature type="transmembrane region" description="Helical" evidence="2">
    <location>
        <begin position="49"/>
        <end position="69"/>
    </location>
</feature>
<feature type="topological domain" description="Periplasmic" evidence="4">
    <location>
        <begin position="70"/>
        <end position="113"/>
    </location>
</feature>
<feature type="transmembrane region" description="Helical" evidence="2">
    <location>
        <begin position="114"/>
        <end position="134"/>
    </location>
</feature>
<feature type="topological domain" description="Cytoplasmic" evidence="4">
    <location>
        <begin position="135"/>
        <end position="146"/>
    </location>
</feature>
<feature type="transmembrane region" description="Helical" evidence="2">
    <location>
        <begin position="147"/>
        <end position="169"/>
    </location>
</feature>
<feature type="topological domain" description="Periplasmic" evidence="4">
    <location>
        <begin position="170"/>
        <end position="172"/>
    </location>
</feature>
<feature type="transmembrane region" description="Helical" evidence="2">
    <location>
        <begin position="173"/>
        <end position="192"/>
    </location>
</feature>
<feature type="topological domain" description="Cytoplasmic" evidence="4">
    <location>
        <begin position="193"/>
        <end position="222"/>
    </location>
</feature>
<feature type="transmembrane region" description="Helical" evidence="2">
    <location>
        <begin position="223"/>
        <end position="243"/>
    </location>
</feature>
<feature type="topological domain" description="Periplasmic" evidence="4">
    <location>
        <begin position="244"/>
        <end position="278"/>
    </location>
</feature>
<feature type="transmembrane region" description="Helical" evidence="2">
    <location>
        <begin position="279"/>
        <end position="299"/>
    </location>
</feature>
<feature type="topological domain" description="Cytoplasmic" evidence="1">
    <location>
        <begin position="300"/>
        <end position="311"/>
    </location>
</feature>
<feature type="domain" description="ABC transmembrane type-1" evidence="3">
    <location>
        <begin position="110"/>
        <end position="299"/>
    </location>
</feature>
<accession>P45053</accession>
<dbReference type="EMBL" id="L42023">
    <property type="protein sequence ID" value="AAC22776.1"/>
    <property type="molecule type" value="Genomic_DNA"/>
</dbReference>
<dbReference type="PIR" id="D64184">
    <property type="entry name" value="D64184"/>
</dbReference>
<dbReference type="RefSeq" id="NP_439279.1">
    <property type="nucleotide sequence ID" value="NC_000907.1"/>
</dbReference>
<dbReference type="SMR" id="P45053"/>
<dbReference type="STRING" id="71421.HI_1122"/>
<dbReference type="EnsemblBacteria" id="AAC22776">
    <property type="protein sequence ID" value="AAC22776"/>
    <property type="gene ID" value="HI_1122"/>
</dbReference>
<dbReference type="KEGG" id="hin:HI_1122"/>
<dbReference type="PATRIC" id="fig|71421.8.peg.1171"/>
<dbReference type="eggNOG" id="COG1173">
    <property type="taxonomic scope" value="Bacteria"/>
</dbReference>
<dbReference type="HOGENOM" id="CLU_028518_1_3_6"/>
<dbReference type="OrthoDB" id="9805884at2"/>
<dbReference type="PhylomeDB" id="P45053"/>
<dbReference type="BioCyc" id="HINF71421:G1GJ1-1157-MONOMER"/>
<dbReference type="Proteomes" id="UP000000579">
    <property type="component" value="Chromosome"/>
</dbReference>
<dbReference type="GO" id="GO:0005886">
    <property type="term" value="C:plasma membrane"/>
    <property type="evidence" value="ECO:0000318"/>
    <property type="project" value="GO_Central"/>
</dbReference>
<dbReference type="GO" id="GO:0015640">
    <property type="term" value="F:peptidoglycan peptide transmembrane transporter activity"/>
    <property type="evidence" value="ECO:0000318"/>
    <property type="project" value="GO_Central"/>
</dbReference>
<dbReference type="GO" id="GO:0015031">
    <property type="term" value="P:protein transport"/>
    <property type="evidence" value="ECO:0007669"/>
    <property type="project" value="UniProtKB-KW"/>
</dbReference>
<dbReference type="CDD" id="cd06261">
    <property type="entry name" value="TM_PBP2"/>
    <property type="match status" value="1"/>
</dbReference>
<dbReference type="Gene3D" id="1.10.3720.10">
    <property type="entry name" value="MetI-like"/>
    <property type="match status" value="1"/>
</dbReference>
<dbReference type="InterPro" id="IPR050366">
    <property type="entry name" value="BP-dependent_transpt_permease"/>
</dbReference>
<dbReference type="InterPro" id="IPR000515">
    <property type="entry name" value="MetI-like"/>
</dbReference>
<dbReference type="InterPro" id="IPR035906">
    <property type="entry name" value="MetI-like_sf"/>
</dbReference>
<dbReference type="InterPro" id="IPR025966">
    <property type="entry name" value="OppC_N"/>
</dbReference>
<dbReference type="NCBIfam" id="NF011935">
    <property type="entry name" value="PRK15406.1"/>
    <property type="match status" value="1"/>
</dbReference>
<dbReference type="PANTHER" id="PTHR43386">
    <property type="entry name" value="OLIGOPEPTIDE TRANSPORT SYSTEM PERMEASE PROTEIN APPC"/>
    <property type="match status" value="1"/>
</dbReference>
<dbReference type="PANTHER" id="PTHR43386:SF2">
    <property type="entry name" value="OLIGOPEPTIDE TRANSPORT SYSTEM PERMEASE PROTEIN OPPC"/>
    <property type="match status" value="1"/>
</dbReference>
<dbReference type="Pfam" id="PF00528">
    <property type="entry name" value="BPD_transp_1"/>
    <property type="match status" value="1"/>
</dbReference>
<dbReference type="Pfam" id="PF12911">
    <property type="entry name" value="OppC_N"/>
    <property type="match status" value="1"/>
</dbReference>
<dbReference type="SUPFAM" id="SSF161098">
    <property type="entry name" value="MetI-like"/>
    <property type="match status" value="1"/>
</dbReference>
<dbReference type="PROSITE" id="PS50928">
    <property type="entry name" value="ABC_TM1"/>
    <property type="match status" value="1"/>
</dbReference>
<name>OPPC_HAEIN</name>
<reference key="1">
    <citation type="journal article" date="1995" name="Science">
        <title>Whole-genome random sequencing and assembly of Haemophilus influenzae Rd.</title>
        <authorList>
            <person name="Fleischmann R.D."/>
            <person name="Adams M.D."/>
            <person name="White O."/>
            <person name="Clayton R.A."/>
            <person name="Kirkness E.F."/>
            <person name="Kerlavage A.R."/>
            <person name="Bult C.J."/>
            <person name="Tomb J.-F."/>
            <person name="Dougherty B.A."/>
            <person name="Merrick J.M."/>
            <person name="McKenney K."/>
            <person name="Sutton G.G."/>
            <person name="FitzHugh W."/>
            <person name="Fields C.A."/>
            <person name="Gocayne J.D."/>
            <person name="Scott J.D."/>
            <person name="Shirley R."/>
            <person name="Liu L.-I."/>
            <person name="Glodek A."/>
            <person name="Kelley J.M."/>
            <person name="Weidman J.F."/>
            <person name="Phillips C.A."/>
            <person name="Spriggs T."/>
            <person name="Hedblom E."/>
            <person name="Cotton M.D."/>
            <person name="Utterback T.R."/>
            <person name="Hanna M.C."/>
            <person name="Nguyen D.T."/>
            <person name="Saudek D.M."/>
            <person name="Brandon R.C."/>
            <person name="Fine L.D."/>
            <person name="Fritchman J.L."/>
            <person name="Fuhrmann J.L."/>
            <person name="Geoghagen N.S.M."/>
            <person name="Gnehm C.L."/>
            <person name="McDonald L.A."/>
            <person name="Small K.V."/>
            <person name="Fraser C.M."/>
            <person name="Smith H.O."/>
            <person name="Venter J.C."/>
        </authorList>
    </citation>
    <scope>NUCLEOTIDE SEQUENCE [LARGE SCALE GENOMIC DNA]</scope>
    <source>
        <strain>ATCC 51907 / DSM 11121 / KW20 / Rd</strain>
    </source>
</reference>
<proteinExistence type="inferred from homology"/>